<dbReference type="EC" id="3.1.-.-"/>
<dbReference type="EMBL" id="AL021961">
    <property type="protein sequence ID" value="CAA17550.1"/>
    <property type="status" value="ALT_SEQ"/>
    <property type="molecule type" value="Genomic_DNA"/>
</dbReference>
<dbReference type="EMBL" id="AL161585">
    <property type="protein sequence ID" value="CAB80139.1"/>
    <property type="status" value="ALT_SEQ"/>
    <property type="molecule type" value="Genomic_DNA"/>
</dbReference>
<dbReference type="EMBL" id="CP002687">
    <property type="protein sequence ID" value="AEE86341.1"/>
    <property type="molecule type" value="Genomic_DNA"/>
</dbReference>
<dbReference type="EMBL" id="CP002687">
    <property type="protein sequence ID" value="AEE86342.1"/>
    <property type="molecule type" value="Genomic_DNA"/>
</dbReference>
<dbReference type="EMBL" id="AY088389">
    <property type="protein sequence ID" value="AAM65927.1"/>
    <property type="molecule type" value="mRNA"/>
</dbReference>
<dbReference type="PIR" id="T05414">
    <property type="entry name" value="T05414"/>
</dbReference>
<dbReference type="RefSeq" id="NP_567960.1">
    <property type="nucleotide sequence ID" value="NM_119585.2"/>
</dbReference>
<dbReference type="RefSeq" id="NP_849493.1">
    <property type="nucleotide sequence ID" value="NM_179162.4"/>
</dbReference>
<dbReference type="PDB" id="2APJ">
    <property type="method" value="X-ray"/>
    <property type="resolution" value="1.60 A"/>
    <property type="chains" value="A/B/C/D=1-260"/>
</dbReference>
<dbReference type="PDBsum" id="2APJ"/>
<dbReference type="SMR" id="Q8L9J9"/>
<dbReference type="FunCoup" id="Q8L9J9">
    <property type="interactions" value="464"/>
</dbReference>
<dbReference type="PaxDb" id="3702-AT4G34215.2"/>
<dbReference type="ProteomicsDB" id="240311"/>
<dbReference type="DNASU" id="829570"/>
<dbReference type="EnsemblPlants" id="AT4G34215.1">
    <property type="protein sequence ID" value="AT4G34215.1"/>
    <property type="gene ID" value="AT4G34215"/>
</dbReference>
<dbReference type="EnsemblPlants" id="AT4G34215.2">
    <property type="protein sequence ID" value="AT4G34215.2"/>
    <property type="gene ID" value="AT4G34215"/>
</dbReference>
<dbReference type="GeneID" id="829570"/>
<dbReference type="Gramene" id="AT4G34215.1">
    <property type="protein sequence ID" value="AT4G34215.1"/>
    <property type="gene ID" value="AT4G34215"/>
</dbReference>
<dbReference type="Gramene" id="AT4G34215.2">
    <property type="protein sequence ID" value="AT4G34215.2"/>
    <property type="gene ID" value="AT4G34215"/>
</dbReference>
<dbReference type="KEGG" id="ath:AT4G34215"/>
<dbReference type="Araport" id="AT4G34215"/>
<dbReference type="TAIR" id="AT4G34215"/>
<dbReference type="eggNOG" id="ENOG502RGKB">
    <property type="taxonomic scope" value="Eukaryota"/>
</dbReference>
<dbReference type="HOGENOM" id="CLU_056093_1_0_1"/>
<dbReference type="InParanoid" id="Q8L9J9"/>
<dbReference type="OMA" id="IHNVRQD"/>
<dbReference type="PhylomeDB" id="Q8L9J9"/>
<dbReference type="EvolutionaryTrace" id="Q8L9J9"/>
<dbReference type="PRO" id="PR:Q8L9J9"/>
<dbReference type="Proteomes" id="UP000006548">
    <property type="component" value="Chromosome 4"/>
</dbReference>
<dbReference type="ExpressionAtlas" id="Q8L9J9">
    <property type="expression patterns" value="baseline and differential"/>
</dbReference>
<dbReference type="GO" id="GO:0005829">
    <property type="term" value="C:cytosol"/>
    <property type="evidence" value="ECO:0007005"/>
    <property type="project" value="TAIR"/>
</dbReference>
<dbReference type="GO" id="GO:0016787">
    <property type="term" value="F:hydrolase activity"/>
    <property type="evidence" value="ECO:0000250"/>
    <property type="project" value="TAIR"/>
</dbReference>
<dbReference type="FunFam" id="3.40.50.1110:FF:000038">
    <property type="entry name" value="Probable carbohydrate esterase At4g34215"/>
    <property type="match status" value="1"/>
</dbReference>
<dbReference type="Gene3D" id="3.40.50.1110">
    <property type="entry name" value="SGNH hydrolase"/>
    <property type="match status" value="1"/>
</dbReference>
<dbReference type="InterPro" id="IPR052940">
    <property type="entry name" value="Carb_Esterase_6"/>
</dbReference>
<dbReference type="InterPro" id="IPR005181">
    <property type="entry name" value="SASA"/>
</dbReference>
<dbReference type="InterPro" id="IPR036514">
    <property type="entry name" value="SGNH_hydro_sf"/>
</dbReference>
<dbReference type="PANTHER" id="PTHR31988:SF19">
    <property type="entry name" value="9-O-ACETYL-N-ACETYLNEURAMINIC ACID DEACETYLASE-RELATED"/>
    <property type="match status" value="1"/>
</dbReference>
<dbReference type="PANTHER" id="PTHR31988">
    <property type="entry name" value="ESTERASE, PUTATIVE (DUF303)-RELATED"/>
    <property type="match status" value="1"/>
</dbReference>
<dbReference type="Pfam" id="PF03629">
    <property type="entry name" value="SASA"/>
    <property type="match status" value="1"/>
</dbReference>
<dbReference type="SUPFAM" id="SSF52266">
    <property type="entry name" value="SGNH hydrolase"/>
    <property type="match status" value="1"/>
</dbReference>
<reference key="1">
    <citation type="journal article" date="1999" name="Nature">
        <title>Sequence and analysis of chromosome 4 of the plant Arabidopsis thaliana.</title>
        <authorList>
            <person name="Mayer K.F.X."/>
            <person name="Schueller C."/>
            <person name="Wambutt R."/>
            <person name="Murphy G."/>
            <person name="Volckaert G."/>
            <person name="Pohl T."/>
            <person name="Duesterhoeft A."/>
            <person name="Stiekema W."/>
            <person name="Entian K.-D."/>
            <person name="Terryn N."/>
            <person name="Harris B."/>
            <person name="Ansorge W."/>
            <person name="Brandt P."/>
            <person name="Grivell L.A."/>
            <person name="Rieger M."/>
            <person name="Weichselgartner M."/>
            <person name="de Simone V."/>
            <person name="Obermaier B."/>
            <person name="Mache R."/>
            <person name="Mueller M."/>
            <person name="Kreis M."/>
            <person name="Delseny M."/>
            <person name="Puigdomenech P."/>
            <person name="Watson M."/>
            <person name="Schmidtheini T."/>
            <person name="Reichert B."/>
            <person name="Portetelle D."/>
            <person name="Perez-Alonso M."/>
            <person name="Boutry M."/>
            <person name="Bancroft I."/>
            <person name="Vos P."/>
            <person name="Hoheisel J."/>
            <person name="Zimmermann W."/>
            <person name="Wedler H."/>
            <person name="Ridley P."/>
            <person name="Langham S.-A."/>
            <person name="McCullagh B."/>
            <person name="Bilham L."/>
            <person name="Robben J."/>
            <person name="van der Schueren J."/>
            <person name="Grymonprez B."/>
            <person name="Chuang Y.-J."/>
            <person name="Vandenbussche F."/>
            <person name="Braeken M."/>
            <person name="Weltjens I."/>
            <person name="Voet M."/>
            <person name="Bastiaens I."/>
            <person name="Aert R."/>
            <person name="Defoor E."/>
            <person name="Weitzenegger T."/>
            <person name="Bothe G."/>
            <person name="Ramsperger U."/>
            <person name="Hilbert H."/>
            <person name="Braun M."/>
            <person name="Holzer E."/>
            <person name="Brandt A."/>
            <person name="Peters S."/>
            <person name="van Staveren M."/>
            <person name="Dirkse W."/>
            <person name="Mooijman P."/>
            <person name="Klein Lankhorst R."/>
            <person name="Rose M."/>
            <person name="Hauf J."/>
            <person name="Koetter P."/>
            <person name="Berneiser S."/>
            <person name="Hempel S."/>
            <person name="Feldpausch M."/>
            <person name="Lamberth S."/>
            <person name="Van den Daele H."/>
            <person name="De Keyser A."/>
            <person name="Buysshaert C."/>
            <person name="Gielen J."/>
            <person name="Villarroel R."/>
            <person name="De Clercq R."/>
            <person name="van Montagu M."/>
            <person name="Rogers J."/>
            <person name="Cronin A."/>
            <person name="Quail M.A."/>
            <person name="Bray-Allen S."/>
            <person name="Clark L."/>
            <person name="Doggett J."/>
            <person name="Hall S."/>
            <person name="Kay M."/>
            <person name="Lennard N."/>
            <person name="McLay K."/>
            <person name="Mayes R."/>
            <person name="Pettett A."/>
            <person name="Rajandream M.A."/>
            <person name="Lyne M."/>
            <person name="Benes V."/>
            <person name="Rechmann S."/>
            <person name="Borkova D."/>
            <person name="Bloecker H."/>
            <person name="Scharfe M."/>
            <person name="Grimm M."/>
            <person name="Loehnert T.-H."/>
            <person name="Dose S."/>
            <person name="de Haan M."/>
            <person name="Maarse A.C."/>
            <person name="Schaefer M."/>
            <person name="Mueller-Auer S."/>
            <person name="Gabel C."/>
            <person name="Fuchs M."/>
            <person name="Fartmann B."/>
            <person name="Granderath K."/>
            <person name="Dauner D."/>
            <person name="Herzl A."/>
            <person name="Neumann S."/>
            <person name="Argiriou A."/>
            <person name="Vitale D."/>
            <person name="Liguori R."/>
            <person name="Piravandi E."/>
            <person name="Massenet O."/>
            <person name="Quigley F."/>
            <person name="Clabauld G."/>
            <person name="Muendlein A."/>
            <person name="Felber R."/>
            <person name="Schnabl S."/>
            <person name="Hiller R."/>
            <person name="Schmidt W."/>
            <person name="Lecharny A."/>
            <person name="Aubourg S."/>
            <person name="Chefdor F."/>
            <person name="Cooke R."/>
            <person name="Berger C."/>
            <person name="Monfort A."/>
            <person name="Casacuberta E."/>
            <person name="Gibbons T."/>
            <person name="Weber N."/>
            <person name="Vandenbol M."/>
            <person name="Bargues M."/>
            <person name="Terol J."/>
            <person name="Torres A."/>
            <person name="Perez-Perez A."/>
            <person name="Purnelle B."/>
            <person name="Bent E."/>
            <person name="Johnson S."/>
            <person name="Tacon D."/>
            <person name="Jesse T."/>
            <person name="Heijnen L."/>
            <person name="Schwarz S."/>
            <person name="Scholler P."/>
            <person name="Heber S."/>
            <person name="Francs P."/>
            <person name="Bielke C."/>
            <person name="Frishman D."/>
            <person name="Haase D."/>
            <person name="Lemcke K."/>
            <person name="Mewes H.-W."/>
            <person name="Stocker S."/>
            <person name="Zaccaria P."/>
            <person name="Bevan M."/>
            <person name="Wilson R.K."/>
            <person name="de la Bastide M."/>
            <person name="Habermann K."/>
            <person name="Parnell L."/>
            <person name="Dedhia N."/>
            <person name="Gnoj L."/>
            <person name="Schutz K."/>
            <person name="Huang E."/>
            <person name="Spiegel L."/>
            <person name="Sekhon M."/>
            <person name="Murray J."/>
            <person name="Sheet P."/>
            <person name="Cordes M."/>
            <person name="Abu-Threideh J."/>
            <person name="Stoneking T."/>
            <person name="Kalicki J."/>
            <person name="Graves T."/>
            <person name="Harmon G."/>
            <person name="Edwards J."/>
            <person name="Latreille P."/>
            <person name="Courtney L."/>
            <person name="Cloud J."/>
            <person name="Abbott A."/>
            <person name="Scott K."/>
            <person name="Johnson D."/>
            <person name="Minx P."/>
            <person name="Bentley D."/>
            <person name="Fulton B."/>
            <person name="Miller N."/>
            <person name="Greco T."/>
            <person name="Kemp K."/>
            <person name="Kramer J."/>
            <person name="Fulton L."/>
            <person name="Mardis E."/>
            <person name="Dante M."/>
            <person name="Pepin K."/>
            <person name="Hillier L.W."/>
            <person name="Nelson J."/>
            <person name="Spieth J."/>
            <person name="Ryan E."/>
            <person name="Andrews S."/>
            <person name="Geisel C."/>
            <person name="Layman D."/>
            <person name="Du H."/>
            <person name="Ali J."/>
            <person name="Berghoff A."/>
            <person name="Jones K."/>
            <person name="Drone K."/>
            <person name="Cotton M."/>
            <person name="Joshu C."/>
            <person name="Antonoiu B."/>
            <person name="Zidanic M."/>
            <person name="Strong C."/>
            <person name="Sun H."/>
            <person name="Lamar B."/>
            <person name="Yordan C."/>
            <person name="Ma P."/>
            <person name="Zhong J."/>
            <person name="Preston R."/>
            <person name="Vil D."/>
            <person name="Shekher M."/>
            <person name="Matero A."/>
            <person name="Shah R."/>
            <person name="Swaby I.K."/>
            <person name="O'Shaughnessy A."/>
            <person name="Rodriguez M."/>
            <person name="Hoffman J."/>
            <person name="Till S."/>
            <person name="Granat S."/>
            <person name="Shohdy N."/>
            <person name="Hasegawa A."/>
            <person name="Hameed A."/>
            <person name="Lodhi M."/>
            <person name="Johnson A."/>
            <person name="Chen E."/>
            <person name="Marra M.A."/>
            <person name="Martienssen R."/>
            <person name="McCombie W.R."/>
        </authorList>
    </citation>
    <scope>NUCLEOTIDE SEQUENCE [LARGE SCALE GENOMIC DNA]</scope>
    <source>
        <strain>cv. Columbia</strain>
    </source>
</reference>
<reference key="2">
    <citation type="journal article" date="2017" name="Plant J.">
        <title>Araport11: a complete reannotation of the Arabidopsis thaliana reference genome.</title>
        <authorList>
            <person name="Cheng C.Y."/>
            <person name="Krishnakumar V."/>
            <person name="Chan A.P."/>
            <person name="Thibaud-Nissen F."/>
            <person name="Schobel S."/>
            <person name="Town C.D."/>
        </authorList>
    </citation>
    <scope>GENOME REANNOTATION</scope>
    <source>
        <strain>cv. Columbia</strain>
    </source>
</reference>
<reference key="3">
    <citation type="submission" date="2002-03" db="EMBL/GenBank/DDBJ databases">
        <title>Full-length cDNA from Arabidopsis thaliana.</title>
        <authorList>
            <person name="Brover V."/>
            <person name="Troukhan M."/>
            <person name="Alexandrov N."/>
            <person name="Lu Y.-P."/>
            <person name="Flavell R."/>
            <person name="Feldmann K.A."/>
        </authorList>
    </citation>
    <scope>NUCLEOTIDE SEQUENCE [LARGE SCALE MRNA]</scope>
</reference>
<reference key="4">
    <citation type="journal article" date="2005" name="Acta Crystallogr. D">
        <title>The structure at 1.6 Angstroms resolution of the protein product of the At4g34215 gene from Arabidopsis thaliana.</title>
        <authorList>
            <person name="Bitto E."/>
            <person name="Bingman C.A."/>
            <person name="McCoy J.G."/>
            <person name="Allard S.T."/>
            <person name="Wesenberg G.E."/>
            <person name="Phillips G.N. Jr."/>
        </authorList>
    </citation>
    <scope>X-RAY CRYSTALLOGRAPHY (1.6 ANGSTROMS) OF 1-260</scope>
</reference>
<protein>
    <recommendedName>
        <fullName>Probable carbohydrate esterase At4g34215</fullName>
        <ecNumber>3.1.-.-</ecNumber>
    </recommendedName>
</protein>
<evidence type="ECO:0000256" key="1">
    <source>
        <dbReference type="SAM" id="MobiDB-lite"/>
    </source>
</evidence>
<evidence type="ECO:0000305" key="2"/>
<evidence type="ECO:0007829" key="3">
    <source>
        <dbReference type="PDB" id="2APJ"/>
    </source>
</evidence>
<proteinExistence type="evidence at protein level"/>
<gene>
    <name type="ordered locus">At4g34215</name>
    <name type="ORF">F10M10.12</name>
    <name type="ORF">F28A23_20</name>
</gene>
<sequence length="260" mass="28358">MEGGSITPGEDKPEIQSPIPPNQIFILSGQSNMAGRGGVFKDHHNNRWVWDKILPPECAPNSSILRLSADLRWEEAHEPLHVDIDTGKVCGVGPGMAFANAVKNRLETDSAVIGLVPCASGGTAIKEWERGSHLYERMVKRTEESRKCGGEIKAVLWYQGESDVLDIHDAESYGNNMDRLIKNLRHDLNLPSLPIIQVAIASGGGYIDKVREAQLGLKLSNVVCVDAKGLPLKSDNLHLTTEAQVQLGLSLAQAYLSNFC</sequence>
<organism>
    <name type="scientific">Arabidopsis thaliana</name>
    <name type="common">Mouse-ear cress</name>
    <dbReference type="NCBI Taxonomy" id="3702"/>
    <lineage>
        <taxon>Eukaryota</taxon>
        <taxon>Viridiplantae</taxon>
        <taxon>Streptophyta</taxon>
        <taxon>Embryophyta</taxon>
        <taxon>Tracheophyta</taxon>
        <taxon>Spermatophyta</taxon>
        <taxon>Magnoliopsida</taxon>
        <taxon>eudicotyledons</taxon>
        <taxon>Gunneridae</taxon>
        <taxon>Pentapetalae</taxon>
        <taxon>rosids</taxon>
        <taxon>malvids</taxon>
        <taxon>Brassicales</taxon>
        <taxon>Brassicaceae</taxon>
        <taxon>Camelineae</taxon>
        <taxon>Arabidopsis</taxon>
    </lineage>
</organism>
<feature type="chain" id="PRO_0000238463" description="Probable carbohydrate esterase At4g34215">
    <location>
        <begin position="1"/>
        <end position="260"/>
    </location>
</feature>
<feature type="region of interest" description="Disordered" evidence="1">
    <location>
        <begin position="1"/>
        <end position="22"/>
    </location>
</feature>
<feature type="active site">
    <location>
        <position position="31"/>
    </location>
</feature>
<feature type="active site">
    <location>
        <position position="235"/>
    </location>
</feature>
<feature type="active site">
    <location>
        <position position="238"/>
    </location>
</feature>
<feature type="sequence conflict" description="In Ref. 3; AAM65927." evidence="2" ref="3">
    <original>G</original>
    <variation>E</variation>
    <location>
        <position position="4"/>
    </location>
</feature>
<feature type="sequence conflict" description="In Ref. 3; AAM65927." evidence="2" ref="3">
    <original>P</original>
    <variation>S</variation>
    <location>
        <position position="8"/>
    </location>
</feature>
<feature type="sequence conflict" description="In Ref. 3; AAM65927." evidence="2" ref="3">
    <original>F</original>
    <variation>V</variation>
    <location>
        <position position="40"/>
    </location>
</feature>
<feature type="sequence conflict" description="In Ref. 3; AAM65927." evidence="2" ref="3">
    <original>N</original>
    <variation>H</variation>
    <location>
        <position position="45"/>
    </location>
</feature>
<feature type="sequence conflict" description="In Ref. 3; AAM65927." evidence="2" ref="3">
    <original>L</original>
    <variation>V</variation>
    <location>
        <position position="106"/>
    </location>
</feature>
<feature type="strand" evidence="3">
    <location>
        <begin position="22"/>
        <end position="30"/>
    </location>
</feature>
<feature type="turn" evidence="3">
    <location>
        <begin position="31"/>
        <end position="33"/>
    </location>
</feature>
<feature type="strand" evidence="3">
    <location>
        <begin position="39"/>
        <end position="41"/>
    </location>
</feature>
<feature type="turn" evidence="3">
    <location>
        <begin position="43"/>
        <end position="45"/>
    </location>
</feature>
<feature type="strand" evidence="3">
    <location>
        <begin position="48"/>
        <end position="50"/>
    </location>
</feature>
<feature type="helix" evidence="3">
    <location>
        <begin position="56"/>
        <end position="58"/>
    </location>
</feature>
<feature type="strand" evidence="3">
    <location>
        <begin position="64"/>
        <end position="67"/>
    </location>
</feature>
<feature type="strand" evidence="3">
    <location>
        <begin position="73"/>
        <end position="75"/>
    </location>
</feature>
<feature type="turn" evidence="3">
    <location>
        <begin position="80"/>
        <end position="84"/>
    </location>
</feature>
<feature type="helix" evidence="3">
    <location>
        <begin position="95"/>
        <end position="106"/>
    </location>
</feature>
<feature type="strand" evidence="3">
    <location>
        <begin position="113"/>
        <end position="117"/>
    </location>
</feature>
<feature type="helix" evidence="3">
    <location>
        <begin position="125"/>
        <end position="128"/>
    </location>
</feature>
<feature type="helix" evidence="3">
    <location>
        <begin position="133"/>
        <end position="145"/>
    </location>
</feature>
<feature type="helix" evidence="3">
    <location>
        <begin position="146"/>
        <end position="148"/>
    </location>
</feature>
<feature type="strand" evidence="3">
    <location>
        <begin position="151"/>
        <end position="158"/>
    </location>
</feature>
<feature type="helix" evidence="3">
    <location>
        <begin position="161"/>
        <end position="163"/>
    </location>
</feature>
<feature type="strand" evidence="3">
    <location>
        <begin position="164"/>
        <end position="166"/>
    </location>
</feature>
<feature type="helix" evidence="3">
    <location>
        <begin position="167"/>
        <end position="187"/>
    </location>
</feature>
<feature type="strand" evidence="3">
    <location>
        <begin position="195"/>
        <end position="199"/>
    </location>
</feature>
<feature type="helix" evidence="3">
    <location>
        <begin position="207"/>
        <end position="216"/>
    </location>
</feature>
<feature type="strand" evidence="3">
    <location>
        <begin position="222"/>
        <end position="226"/>
    </location>
</feature>
<feature type="strand" evidence="3">
    <location>
        <begin position="236"/>
        <end position="239"/>
    </location>
</feature>
<feature type="helix" evidence="3">
    <location>
        <begin position="241"/>
        <end position="259"/>
    </location>
</feature>
<accession>Q8L9J9</accession>
<accession>O49483</accession>
<name>CAES_ARATH</name>
<keyword id="KW-0002">3D-structure</keyword>
<keyword id="KW-0378">Hydrolase</keyword>
<keyword id="KW-1185">Reference proteome</keyword>
<comment type="similarity">
    <text evidence="2">Belongs to the carbohydrate esterase 6 family.</text>
</comment>
<comment type="sequence caution" evidence="2">
    <conflict type="erroneous gene model prediction">
        <sequence resource="EMBL-CDS" id="CAA17550"/>
    </conflict>
    <text>The predicted gene At4g34220 has been split into 2 genes: At4g34215 and At4g34220.</text>
</comment>
<comment type="sequence caution" evidence="2">
    <conflict type="erroneous gene model prediction">
        <sequence resource="EMBL-CDS" id="CAB80139"/>
    </conflict>
    <text>The predicted gene At4g34220 has been split into 2 genes: At4g34215 and At4g34220.</text>
</comment>